<comment type="function">
    <text evidence="1">Specifically methylates the N4 position of cytidine in position 1402 (C1402) of 16S rRNA.</text>
</comment>
<comment type="catalytic activity">
    <reaction evidence="1">
        <text>cytidine(1402) in 16S rRNA + S-adenosyl-L-methionine = N(4)-methylcytidine(1402) in 16S rRNA + S-adenosyl-L-homocysteine + H(+)</text>
        <dbReference type="Rhea" id="RHEA:42928"/>
        <dbReference type="Rhea" id="RHEA-COMP:10286"/>
        <dbReference type="Rhea" id="RHEA-COMP:10287"/>
        <dbReference type="ChEBI" id="CHEBI:15378"/>
        <dbReference type="ChEBI" id="CHEBI:57856"/>
        <dbReference type="ChEBI" id="CHEBI:59789"/>
        <dbReference type="ChEBI" id="CHEBI:74506"/>
        <dbReference type="ChEBI" id="CHEBI:82748"/>
        <dbReference type="EC" id="2.1.1.199"/>
    </reaction>
</comment>
<comment type="subcellular location">
    <subcellularLocation>
        <location evidence="1">Cytoplasm</location>
    </subcellularLocation>
</comment>
<comment type="similarity">
    <text evidence="1">Belongs to the methyltransferase superfamily. RsmH family.</text>
</comment>
<organism>
    <name type="scientific">Borrelia garinii subsp. bavariensis (strain ATCC BAA-2496 / DSM 23469 / PBi)</name>
    <name type="common">Borreliella bavariensis</name>
    <dbReference type="NCBI Taxonomy" id="290434"/>
    <lineage>
        <taxon>Bacteria</taxon>
        <taxon>Pseudomonadati</taxon>
        <taxon>Spirochaetota</taxon>
        <taxon>Spirochaetia</taxon>
        <taxon>Spirochaetales</taxon>
        <taxon>Borreliaceae</taxon>
        <taxon>Borreliella</taxon>
    </lineage>
</organism>
<evidence type="ECO:0000255" key="1">
    <source>
        <dbReference type="HAMAP-Rule" id="MF_01007"/>
    </source>
</evidence>
<protein>
    <recommendedName>
        <fullName evidence="1">Ribosomal RNA small subunit methyltransferase H</fullName>
        <ecNumber evidence="1">2.1.1.199</ecNumber>
    </recommendedName>
    <alternativeName>
        <fullName evidence="1">16S rRNA m(4)C1402 methyltransferase</fullName>
    </alternativeName>
    <alternativeName>
        <fullName evidence="1">rRNA (cytosine-N(4)-)-methyltransferase RsmH</fullName>
    </alternativeName>
</protein>
<keyword id="KW-0963">Cytoplasm</keyword>
<keyword id="KW-0489">Methyltransferase</keyword>
<keyword id="KW-0698">rRNA processing</keyword>
<keyword id="KW-0949">S-adenosyl-L-methionine</keyword>
<keyword id="KW-0808">Transferase</keyword>
<reference key="1">
    <citation type="journal article" date="2004" name="Nucleic Acids Res.">
        <title>Comparative analysis of the Borrelia garinii genome.</title>
        <authorList>
            <person name="Gloeckner G."/>
            <person name="Lehmann R."/>
            <person name="Romualdi A."/>
            <person name="Pradella S."/>
            <person name="Schulte-Spechtel U."/>
            <person name="Schilhabel M."/>
            <person name="Wilske B."/>
            <person name="Suehnel J."/>
            <person name="Platzer M."/>
        </authorList>
    </citation>
    <scope>NUCLEOTIDE SEQUENCE [LARGE SCALE GENOMIC DNA]</scope>
    <source>
        <strain>ATCC BAA-2496 / DSM 23469 / PBi</strain>
    </source>
</reference>
<sequence>MNNNVFHFPVLLDAICKLIEDLPVKSDLIYIDSTLGEGAHAKAILEKYDFLSLVGIERDPQILERAKQFLFAFKGRITYFNDWFDNFFVNYPLNAKANFILVDLGISMFHYKGSKKGFSFLEDEPLDMRLCSSSCSISAADIVNTFSKYDLESLIYDLSNEHYSRRISKAIVEYRKIKRIETTKELQAVINKVYPFSKAKINPATKTFQALRICVNDELARLKRSLPLWIENLAKDGILAIITFHSIEDRIVKDFFRSLSCDLYAKISKKPIIPSFDEIKKNKPSRSAKLRALKKI</sequence>
<gene>
    <name evidence="1" type="primary">rsmH</name>
    <name type="synonym">mraW</name>
    <name type="ordered locus">BG0310</name>
</gene>
<dbReference type="EC" id="2.1.1.199" evidence="1"/>
<dbReference type="EMBL" id="CP000013">
    <property type="protein sequence ID" value="AAU07163.1"/>
    <property type="molecule type" value="Genomic_DNA"/>
</dbReference>
<dbReference type="RefSeq" id="WP_011193639.1">
    <property type="nucleotide sequence ID" value="NZ_CP028872.1"/>
</dbReference>
<dbReference type="SMR" id="Q661V8"/>
<dbReference type="GeneID" id="45161099"/>
<dbReference type="KEGG" id="bga:BG0310"/>
<dbReference type="eggNOG" id="COG0275">
    <property type="taxonomic scope" value="Bacteria"/>
</dbReference>
<dbReference type="HOGENOM" id="CLU_038422_1_1_12"/>
<dbReference type="OrthoDB" id="9806637at2"/>
<dbReference type="Proteomes" id="UP000002276">
    <property type="component" value="Chromosome"/>
</dbReference>
<dbReference type="GO" id="GO:0005737">
    <property type="term" value="C:cytoplasm"/>
    <property type="evidence" value="ECO:0007669"/>
    <property type="project" value="UniProtKB-SubCell"/>
</dbReference>
<dbReference type="GO" id="GO:0071424">
    <property type="term" value="F:rRNA (cytosine-N4-)-methyltransferase activity"/>
    <property type="evidence" value="ECO:0007669"/>
    <property type="project" value="UniProtKB-UniRule"/>
</dbReference>
<dbReference type="GO" id="GO:0070475">
    <property type="term" value="P:rRNA base methylation"/>
    <property type="evidence" value="ECO:0007669"/>
    <property type="project" value="UniProtKB-UniRule"/>
</dbReference>
<dbReference type="Gene3D" id="1.10.150.170">
    <property type="entry name" value="Putative methyltransferase TM0872, insert domain"/>
    <property type="match status" value="1"/>
</dbReference>
<dbReference type="Gene3D" id="3.40.50.150">
    <property type="entry name" value="Vaccinia Virus protein VP39"/>
    <property type="match status" value="1"/>
</dbReference>
<dbReference type="HAMAP" id="MF_01007">
    <property type="entry name" value="16SrRNA_methyltr_H"/>
    <property type="match status" value="1"/>
</dbReference>
<dbReference type="InterPro" id="IPR002903">
    <property type="entry name" value="RsmH"/>
</dbReference>
<dbReference type="InterPro" id="IPR023397">
    <property type="entry name" value="SAM-dep_MeTrfase_MraW_recog"/>
</dbReference>
<dbReference type="InterPro" id="IPR029063">
    <property type="entry name" value="SAM-dependent_MTases_sf"/>
</dbReference>
<dbReference type="NCBIfam" id="TIGR00006">
    <property type="entry name" value="16S rRNA (cytosine(1402)-N(4))-methyltransferase RsmH"/>
    <property type="match status" value="1"/>
</dbReference>
<dbReference type="PANTHER" id="PTHR11265:SF0">
    <property type="entry name" value="12S RRNA N4-METHYLCYTIDINE METHYLTRANSFERASE"/>
    <property type="match status" value="1"/>
</dbReference>
<dbReference type="PANTHER" id="PTHR11265">
    <property type="entry name" value="S-ADENOSYL-METHYLTRANSFERASE MRAW"/>
    <property type="match status" value="1"/>
</dbReference>
<dbReference type="Pfam" id="PF01795">
    <property type="entry name" value="Methyltransf_5"/>
    <property type="match status" value="1"/>
</dbReference>
<dbReference type="PIRSF" id="PIRSF004486">
    <property type="entry name" value="MraW"/>
    <property type="match status" value="1"/>
</dbReference>
<dbReference type="SUPFAM" id="SSF81799">
    <property type="entry name" value="Putative methyltransferase TM0872, insert domain"/>
    <property type="match status" value="1"/>
</dbReference>
<dbReference type="SUPFAM" id="SSF53335">
    <property type="entry name" value="S-adenosyl-L-methionine-dependent methyltransferases"/>
    <property type="match status" value="1"/>
</dbReference>
<accession>Q661V8</accession>
<name>RSMH_BORGP</name>
<proteinExistence type="inferred from homology"/>
<feature type="chain" id="PRO_0000108586" description="Ribosomal RNA small subunit methyltransferase H">
    <location>
        <begin position="1"/>
        <end position="296"/>
    </location>
</feature>
<feature type="binding site" evidence="1">
    <location>
        <begin position="38"/>
        <end position="40"/>
    </location>
    <ligand>
        <name>S-adenosyl-L-methionine</name>
        <dbReference type="ChEBI" id="CHEBI:59789"/>
    </ligand>
</feature>
<feature type="binding site" evidence="1">
    <location>
        <position position="57"/>
    </location>
    <ligand>
        <name>S-adenosyl-L-methionine</name>
        <dbReference type="ChEBI" id="CHEBI:59789"/>
    </ligand>
</feature>
<feature type="binding site" evidence="1">
    <location>
        <position position="80"/>
    </location>
    <ligand>
        <name>S-adenosyl-L-methionine</name>
        <dbReference type="ChEBI" id="CHEBI:59789"/>
    </ligand>
</feature>
<feature type="binding site" evidence="1">
    <location>
        <position position="103"/>
    </location>
    <ligand>
        <name>S-adenosyl-L-methionine</name>
        <dbReference type="ChEBI" id="CHEBI:59789"/>
    </ligand>
</feature>
<feature type="binding site" evidence="1">
    <location>
        <position position="110"/>
    </location>
    <ligand>
        <name>S-adenosyl-L-methionine</name>
        <dbReference type="ChEBI" id="CHEBI:59789"/>
    </ligand>
</feature>